<organism>
    <name type="scientific">Haemophilus influenzae (strain PittGG)</name>
    <dbReference type="NCBI Taxonomy" id="374931"/>
    <lineage>
        <taxon>Bacteria</taxon>
        <taxon>Pseudomonadati</taxon>
        <taxon>Pseudomonadota</taxon>
        <taxon>Gammaproteobacteria</taxon>
        <taxon>Pasteurellales</taxon>
        <taxon>Pasteurellaceae</taxon>
        <taxon>Haemophilus</taxon>
    </lineage>
</organism>
<name>SYGB_HAEIG</name>
<feature type="chain" id="PRO_1000006365" description="Glycine--tRNA ligase beta subunit">
    <location>
        <begin position="1"/>
        <end position="688"/>
    </location>
</feature>
<protein>
    <recommendedName>
        <fullName evidence="1">Glycine--tRNA ligase beta subunit</fullName>
        <ecNumber evidence="1">6.1.1.14</ecNumber>
    </recommendedName>
    <alternativeName>
        <fullName evidence="1">Glycyl-tRNA synthetase beta subunit</fullName>
        <shortName evidence="1">GlyRS</shortName>
    </alternativeName>
</protein>
<evidence type="ECO:0000255" key="1">
    <source>
        <dbReference type="HAMAP-Rule" id="MF_00255"/>
    </source>
</evidence>
<sequence length="688" mass="75830">MTTQNFLVEIGTEELPPKALKTLATSFADNVEAELNQAGLTFDKIEWFAAPRRLAVKVLNLAKQQPSKEIEKRGPAVSAAFDAEGKPTKAAEGWARGCGITVEQAERIATDKGEWLVHRAKIEGQPTKNLLNDIVANALAKLPIPKPMRWADKTVQFIRPVHTVTMLLGDELIEGEILGVASARTIRGHRFLGEKEFDIQHADQYPQLLRDKGSVVADFNERKAEILAKSQAKATALGGVADIEESLLEEVTSLVEYPNVLAAKFEERFLAVPAEALVYTMKGDQKYFPIYDKDGRLLPHFIFVSNINPEDPTAIIEGNEKVVRPRLTDAEFFFKTDLKQKLVDRLPRLETVLFQQQLGTLKDKTDRIEQLAGEIAKQIGTDEAKAKRAGLLSKCDLMTNMVFEFTDTQGVMGMHYARHDGEDEEVAVALNEQYMPRFAGDELPKSLVASAVALADKFDTLTGIFGIGQAPKGSADPFALRRAALGALRIIVEKNLPLDLEDLVKKSAALFGDKLTNQNVVADVVDFMLGRFRAWYQDEGIEVDVIQAVLARRPTRPADFDARVRAVSHFRTLDSAEALAAANKRVSNILAKADAAIGEINLTVCVEQAEKALAEAVLALRTEVQPLIAQGDYTTVLDKLANLRAPVDSFFDNVMVNAEDPALRQNRLAILNTLQGLFLQVADISVLQ</sequence>
<keyword id="KW-0030">Aminoacyl-tRNA synthetase</keyword>
<keyword id="KW-0067">ATP-binding</keyword>
<keyword id="KW-0963">Cytoplasm</keyword>
<keyword id="KW-0436">Ligase</keyword>
<keyword id="KW-0547">Nucleotide-binding</keyword>
<keyword id="KW-0648">Protein biosynthesis</keyword>
<reference key="1">
    <citation type="journal article" date="2007" name="Genome Biol.">
        <title>Characterization and modeling of the Haemophilus influenzae core and supragenomes based on the complete genomic sequences of Rd and 12 clinical nontypeable strains.</title>
        <authorList>
            <person name="Hogg J.S."/>
            <person name="Hu F.Z."/>
            <person name="Janto B."/>
            <person name="Boissy R."/>
            <person name="Hayes J."/>
            <person name="Keefe R."/>
            <person name="Post J.C."/>
            <person name="Ehrlich G.D."/>
        </authorList>
    </citation>
    <scope>NUCLEOTIDE SEQUENCE [LARGE SCALE GENOMIC DNA]</scope>
    <source>
        <strain>PittGG</strain>
    </source>
</reference>
<gene>
    <name evidence="1" type="primary">glyS</name>
    <name type="ordered locus">CGSHiGG_08185</name>
</gene>
<proteinExistence type="inferred from homology"/>
<dbReference type="EC" id="6.1.1.14" evidence="1"/>
<dbReference type="EMBL" id="CP000672">
    <property type="protein sequence ID" value="ABR00471.1"/>
    <property type="molecule type" value="Genomic_DNA"/>
</dbReference>
<dbReference type="SMR" id="A5UI65"/>
<dbReference type="KEGG" id="hiq:CGSHiGG_08185"/>
<dbReference type="HOGENOM" id="CLU_007220_2_2_6"/>
<dbReference type="Proteomes" id="UP000001990">
    <property type="component" value="Chromosome"/>
</dbReference>
<dbReference type="GO" id="GO:0005829">
    <property type="term" value="C:cytosol"/>
    <property type="evidence" value="ECO:0007669"/>
    <property type="project" value="TreeGrafter"/>
</dbReference>
<dbReference type="GO" id="GO:0004814">
    <property type="term" value="F:arginine-tRNA ligase activity"/>
    <property type="evidence" value="ECO:0007669"/>
    <property type="project" value="InterPro"/>
</dbReference>
<dbReference type="GO" id="GO:0005524">
    <property type="term" value="F:ATP binding"/>
    <property type="evidence" value="ECO:0007669"/>
    <property type="project" value="UniProtKB-UniRule"/>
</dbReference>
<dbReference type="GO" id="GO:0004820">
    <property type="term" value="F:glycine-tRNA ligase activity"/>
    <property type="evidence" value="ECO:0007669"/>
    <property type="project" value="UniProtKB-UniRule"/>
</dbReference>
<dbReference type="GO" id="GO:0006420">
    <property type="term" value="P:arginyl-tRNA aminoacylation"/>
    <property type="evidence" value="ECO:0007669"/>
    <property type="project" value="InterPro"/>
</dbReference>
<dbReference type="GO" id="GO:0006426">
    <property type="term" value="P:glycyl-tRNA aminoacylation"/>
    <property type="evidence" value="ECO:0007669"/>
    <property type="project" value="UniProtKB-UniRule"/>
</dbReference>
<dbReference type="HAMAP" id="MF_00255">
    <property type="entry name" value="Gly_tRNA_synth_beta"/>
    <property type="match status" value="1"/>
</dbReference>
<dbReference type="InterPro" id="IPR008909">
    <property type="entry name" value="DALR_anticod-bd"/>
</dbReference>
<dbReference type="InterPro" id="IPR015944">
    <property type="entry name" value="Gly-tRNA-synth_bsu"/>
</dbReference>
<dbReference type="InterPro" id="IPR006194">
    <property type="entry name" value="Gly-tRNA-synth_heterodimer"/>
</dbReference>
<dbReference type="NCBIfam" id="TIGR00211">
    <property type="entry name" value="glyS"/>
    <property type="match status" value="1"/>
</dbReference>
<dbReference type="PANTHER" id="PTHR30075:SF2">
    <property type="entry name" value="GLYCINE--TRNA LIGASE, CHLOROPLASTIC_MITOCHONDRIAL 2"/>
    <property type="match status" value="1"/>
</dbReference>
<dbReference type="PANTHER" id="PTHR30075">
    <property type="entry name" value="GLYCYL-TRNA SYNTHETASE"/>
    <property type="match status" value="1"/>
</dbReference>
<dbReference type="Pfam" id="PF05746">
    <property type="entry name" value="DALR_1"/>
    <property type="match status" value="1"/>
</dbReference>
<dbReference type="Pfam" id="PF02092">
    <property type="entry name" value="tRNA_synt_2f"/>
    <property type="match status" value="1"/>
</dbReference>
<dbReference type="PRINTS" id="PR01045">
    <property type="entry name" value="TRNASYNTHGB"/>
</dbReference>
<dbReference type="SMART" id="SM00836">
    <property type="entry name" value="DALR_1"/>
    <property type="match status" value="1"/>
</dbReference>
<dbReference type="SUPFAM" id="SSF109604">
    <property type="entry name" value="HD-domain/PDEase-like"/>
    <property type="match status" value="1"/>
</dbReference>
<dbReference type="PROSITE" id="PS50861">
    <property type="entry name" value="AA_TRNA_LIGASE_II_GLYAB"/>
    <property type="match status" value="1"/>
</dbReference>
<accession>A5UI65</accession>
<comment type="catalytic activity">
    <reaction evidence="1">
        <text>tRNA(Gly) + glycine + ATP = glycyl-tRNA(Gly) + AMP + diphosphate</text>
        <dbReference type="Rhea" id="RHEA:16013"/>
        <dbReference type="Rhea" id="RHEA-COMP:9664"/>
        <dbReference type="Rhea" id="RHEA-COMP:9683"/>
        <dbReference type="ChEBI" id="CHEBI:30616"/>
        <dbReference type="ChEBI" id="CHEBI:33019"/>
        <dbReference type="ChEBI" id="CHEBI:57305"/>
        <dbReference type="ChEBI" id="CHEBI:78442"/>
        <dbReference type="ChEBI" id="CHEBI:78522"/>
        <dbReference type="ChEBI" id="CHEBI:456215"/>
        <dbReference type="EC" id="6.1.1.14"/>
    </reaction>
</comment>
<comment type="subunit">
    <text evidence="1">Tetramer of two alpha and two beta subunits.</text>
</comment>
<comment type="subcellular location">
    <subcellularLocation>
        <location evidence="1">Cytoplasm</location>
    </subcellularLocation>
</comment>
<comment type="similarity">
    <text evidence="1">Belongs to the class-II aminoacyl-tRNA synthetase family.</text>
</comment>